<gene>
    <name evidence="1" type="primary">folD</name>
    <name type="ordered locus">SZO_13810</name>
</gene>
<proteinExistence type="inferred from homology"/>
<feature type="chain" id="PRO_1000215607" description="Bifunctional protein FolD">
    <location>
        <begin position="1"/>
        <end position="284"/>
    </location>
</feature>
<feature type="binding site" evidence="1">
    <location>
        <begin position="165"/>
        <end position="167"/>
    </location>
    <ligand>
        <name>NADP(+)</name>
        <dbReference type="ChEBI" id="CHEBI:58349"/>
    </ligand>
</feature>
<feature type="binding site" evidence="1">
    <location>
        <position position="190"/>
    </location>
    <ligand>
        <name>NADP(+)</name>
        <dbReference type="ChEBI" id="CHEBI:58349"/>
    </ligand>
</feature>
<evidence type="ECO:0000255" key="1">
    <source>
        <dbReference type="HAMAP-Rule" id="MF_01576"/>
    </source>
</evidence>
<name>FOLD_STRS7</name>
<keyword id="KW-0028">Amino-acid biosynthesis</keyword>
<keyword id="KW-0368">Histidine biosynthesis</keyword>
<keyword id="KW-0378">Hydrolase</keyword>
<keyword id="KW-0486">Methionine biosynthesis</keyword>
<keyword id="KW-0511">Multifunctional enzyme</keyword>
<keyword id="KW-0521">NADP</keyword>
<keyword id="KW-0554">One-carbon metabolism</keyword>
<keyword id="KW-0560">Oxidoreductase</keyword>
<keyword id="KW-0658">Purine biosynthesis</keyword>
<protein>
    <recommendedName>
        <fullName evidence="1">Bifunctional protein FolD</fullName>
    </recommendedName>
    <domain>
        <recommendedName>
            <fullName evidence="1">Methylenetetrahydrofolate dehydrogenase</fullName>
            <ecNumber evidence="1">1.5.1.5</ecNumber>
        </recommendedName>
    </domain>
    <domain>
        <recommendedName>
            <fullName evidence="1">Methenyltetrahydrofolate cyclohydrolase</fullName>
            <ecNumber evidence="1">3.5.4.9</ecNumber>
        </recommendedName>
    </domain>
</protein>
<sequence length="284" mass="30871">MVQIIDGKALAQKMQAALAKKVESLKAEKGIVPGLVVILVGDNPASQVYVRNKERAALAAGFKSETVRLSDSVCQEELIELIEQYNQDDTIHGILVQLPLPHHINDKSIILAIDPKKDVDGFHPMNTGHLWSGRPNMVPCTPAGIMEMFHDYGIELEGKNAVIVGRSNIVGKPMAQLLLDKNATVTLTHSRTRQLAAICRRADILIVAIGQGHFITKDFVKEGAVVIDVGMNRDVNGRLIGDVAFDEVSELASMITPVPGGVGPMTITMLLEQTYQAALRRVSQ</sequence>
<dbReference type="EC" id="1.5.1.5" evidence="1"/>
<dbReference type="EC" id="3.5.4.9" evidence="1"/>
<dbReference type="EMBL" id="FM204884">
    <property type="protein sequence ID" value="CAW99962.1"/>
    <property type="molecule type" value="Genomic_DNA"/>
</dbReference>
<dbReference type="SMR" id="C0MD36"/>
<dbReference type="KEGG" id="seq:SZO_13810"/>
<dbReference type="PATRIC" id="fig|40041.11.peg.1467"/>
<dbReference type="eggNOG" id="COG0190">
    <property type="taxonomic scope" value="Bacteria"/>
</dbReference>
<dbReference type="HOGENOM" id="CLU_034045_2_1_9"/>
<dbReference type="UniPathway" id="UPA00193"/>
<dbReference type="Proteomes" id="UP000001368">
    <property type="component" value="Chromosome"/>
</dbReference>
<dbReference type="GO" id="GO:0005829">
    <property type="term" value="C:cytosol"/>
    <property type="evidence" value="ECO:0007669"/>
    <property type="project" value="TreeGrafter"/>
</dbReference>
<dbReference type="GO" id="GO:0004477">
    <property type="term" value="F:methenyltetrahydrofolate cyclohydrolase activity"/>
    <property type="evidence" value="ECO:0007669"/>
    <property type="project" value="UniProtKB-UniRule"/>
</dbReference>
<dbReference type="GO" id="GO:0004488">
    <property type="term" value="F:methylenetetrahydrofolate dehydrogenase (NADP+) activity"/>
    <property type="evidence" value="ECO:0007669"/>
    <property type="project" value="UniProtKB-UniRule"/>
</dbReference>
<dbReference type="GO" id="GO:0000105">
    <property type="term" value="P:L-histidine biosynthetic process"/>
    <property type="evidence" value="ECO:0007669"/>
    <property type="project" value="UniProtKB-KW"/>
</dbReference>
<dbReference type="GO" id="GO:0009086">
    <property type="term" value="P:methionine biosynthetic process"/>
    <property type="evidence" value="ECO:0007669"/>
    <property type="project" value="UniProtKB-KW"/>
</dbReference>
<dbReference type="GO" id="GO:0006164">
    <property type="term" value="P:purine nucleotide biosynthetic process"/>
    <property type="evidence" value="ECO:0007669"/>
    <property type="project" value="UniProtKB-KW"/>
</dbReference>
<dbReference type="GO" id="GO:0035999">
    <property type="term" value="P:tetrahydrofolate interconversion"/>
    <property type="evidence" value="ECO:0007669"/>
    <property type="project" value="UniProtKB-UniRule"/>
</dbReference>
<dbReference type="CDD" id="cd01080">
    <property type="entry name" value="NAD_bind_m-THF_DH_Cyclohyd"/>
    <property type="match status" value="1"/>
</dbReference>
<dbReference type="FunFam" id="3.40.50.720:FF:000094">
    <property type="entry name" value="Bifunctional protein FolD"/>
    <property type="match status" value="1"/>
</dbReference>
<dbReference type="FunFam" id="3.40.50.10860:FF:000005">
    <property type="entry name" value="C-1-tetrahydrofolate synthase, cytoplasmic, putative"/>
    <property type="match status" value="1"/>
</dbReference>
<dbReference type="Gene3D" id="3.40.50.10860">
    <property type="entry name" value="Leucine Dehydrogenase, chain A, domain 1"/>
    <property type="match status" value="1"/>
</dbReference>
<dbReference type="Gene3D" id="3.40.50.720">
    <property type="entry name" value="NAD(P)-binding Rossmann-like Domain"/>
    <property type="match status" value="1"/>
</dbReference>
<dbReference type="HAMAP" id="MF_01576">
    <property type="entry name" value="THF_DHG_CYH"/>
    <property type="match status" value="1"/>
</dbReference>
<dbReference type="InterPro" id="IPR046346">
    <property type="entry name" value="Aminoacid_DH-like_N_sf"/>
</dbReference>
<dbReference type="InterPro" id="IPR036291">
    <property type="entry name" value="NAD(P)-bd_dom_sf"/>
</dbReference>
<dbReference type="InterPro" id="IPR000672">
    <property type="entry name" value="THF_DH/CycHdrlase"/>
</dbReference>
<dbReference type="InterPro" id="IPR020630">
    <property type="entry name" value="THF_DH/CycHdrlase_cat_dom"/>
</dbReference>
<dbReference type="InterPro" id="IPR020867">
    <property type="entry name" value="THF_DH/CycHdrlase_CS"/>
</dbReference>
<dbReference type="InterPro" id="IPR020631">
    <property type="entry name" value="THF_DH/CycHdrlase_NAD-bd_dom"/>
</dbReference>
<dbReference type="NCBIfam" id="NF008058">
    <property type="entry name" value="PRK10792.1"/>
    <property type="match status" value="1"/>
</dbReference>
<dbReference type="NCBIfam" id="NF010776">
    <property type="entry name" value="PRK14179.1"/>
    <property type="match status" value="1"/>
</dbReference>
<dbReference type="NCBIfam" id="NF010783">
    <property type="entry name" value="PRK14186.1"/>
    <property type="match status" value="1"/>
</dbReference>
<dbReference type="NCBIfam" id="NF010785">
    <property type="entry name" value="PRK14188.1"/>
    <property type="match status" value="1"/>
</dbReference>
<dbReference type="PANTHER" id="PTHR48099:SF5">
    <property type="entry name" value="C-1-TETRAHYDROFOLATE SYNTHASE, CYTOPLASMIC"/>
    <property type="match status" value="1"/>
</dbReference>
<dbReference type="PANTHER" id="PTHR48099">
    <property type="entry name" value="C-1-TETRAHYDROFOLATE SYNTHASE, CYTOPLASMIC-RELATED"/>
    <property type="match status" value="1"/>
</dbReference>
<dbReference type="Pfam" id="PF00763">
    <property type="entry name" value="THF_DHG_CYH"/>
    <property type="match status" value="1"/>
</dbReference>
<dbReference type="Pfam" id="PF02882">
    <property type="entry name" value="THF_DHG_CYH_C"/>
    <property type="match status" value="1"/>
</dbReference>
<dbReference type="PRINTS" id="PR00085">
    <property type="entry name" value="THFDHDRGNASE"/>
</dbReference>
<dbReference type="SUPFAM" id="SSF53223">
    <property type="entry name" value="Aminoacid dehydrogenase-like, N-terminal domain"/>
    <property type="match status" value="1"/>
</dbReference>
<dbReference type="SUPFAM" id="SSF51735">
    <property type="entry name" value="NAD(P)-binding Rossmann-fold domains"/>
    <property type="match status" value="1"/>
</dbReference>
<dbReference type="PROSITE" id="PS00766">
    <property type="entry name" value="THF_DHG_CYH_1"/>
    <property type="match status" value="1"/>
</dbReference>
<dbReference type="PROSITE" id="PS00767">
    <property type="entry name" value="THF_DHG_CYH_2"/>
    <property type="match status" value="1"/>
</dbReference>
<reference key="1">
    <citation type="journal article" date="2009" name="PLoS Pathog.">
        <title>Genomic evidence for the evolution of Streptococcus equi: host restriction, increased virulence, and genetic exchange with human pathogens.</title>
        <authorList>
            <person name="Holden M.T.G."/>
            <person name="Heather Z."/>
            <person name="Paillot R."/>
            <person name="Steward K.F."/>
            <person name="Webb K."/>
            <person name="Ainslie F."/>
            <person name="Jourdan T."/>
            <person name="Bason N.C."/>
            <person name="Holroyd N.E."/>
            <person name="Mungall K."/>
            <person name="Quail M.A."/>
            <person name="Sanders M."/>
            <person name="Simmonds M."/>
            <person name="Willey D."/>
            <person name="Brooks K."/>
            <person name="Aanensen D.M."/>
            <person name="Spratt B.G."/>
            <person name="Jolley K.A."/>
            <person name="Maiden M.C.J."/>
            <person name="Kehoe M."/>
            <person name="Chanter N."/>
            <person name="Bentley S.D."/>
            <person name="Robinson C."/>
            <person name="Maskell D.J."/>
            <person name="Parkhill J."/>
            <person name="Waller A.S."/>
        </authorList>
    </citation>
    <scope>NUCLEOTIDE SEQUENCE [LARGE SCALE GENOMIC DNA]</scope>
    <source>
        <strain>H70</strain>
    </source>
</reference>
<accession>C0MD36</accession>
<organism>
    <name type="scientific">Streptococcus equi subsp. zooepidemicus (strain H70)</name>
    <dbReference type="NCBI Taxonomy" id="553483"/>
    <lineage>
        <taxon>Bacteria</taxon>
        <taxon>Bacillati</taxon>
        <taxon>Bacillota</taxon>
        <taxon>Bacilli</taxon>
        <taxon>Lactobacillales</taxon>
        <taxon>Streptococcaceae</taxon>
        <taxon>Streptococcus</taxon>
    </lineage>
</organism>
<comment type="function">
    <text evidence="1">Catalyzes the oxidation of 5,10-methylenetetrahydrofolate to 5,10-methenyltetrahydrofolate and then the hydrolysis of 5,10-methenyltetrahydrofolate to 10-formyltetrahydrofolate.</text>
</comment>
<comment type="catalytic activity">
    <reaction evidence="1">
        <text>(6R)-5,10-methylene-5,6,7,8-tetrahydrofolate + NADP(+) = (6R)-5,10-methenyltetrahydrofolate + NADPH</text>
        <dbReference type="Rhea" id="RHEA:22812"/>
        <dbReference type="ChEBI" id="CHEBI:15636"/>
        <dbReference type="ChEBI" id="CHEBI:57455"/>
        <dbReference type="ChEBI" id="CHEBI:57783"/>
        <dbReference type="ChEBI" id="CHEBI:58349"/>
        <dbReference type="EC" id="1.5.1.5"/>
    </reaction>
</comment>
<comment type="catalytic activity">
    <reaction evidence="1">
        <text>(6R)-5,10-methenyltetrahydrofolate + H2O = (6R)-10-formyltetrahydrofolate + H(+)</text>
        <dbReference type="Rhea" id="RHEA:23700"/>
        <dbReference type="ChEBI" id="CHEBI:15377"/>
        <dbReference type="ChEBI" id="CHEBI:15378"/>
        <dbReference type="ChEBI" id="CHEBI:57455"/>
        <dbReference type="ChEBI" id="CHEBI:195366"/>
        <dbReference type="EC" id="3.5.4.9"/>
    </reaction>
</comment>
<comment type="pathway">
    <text evidence="1">One-carbon metabolism; tetrahydrofolate interconversion.</text>
</comment>
<comment type="subunit">
    <text evidence="1">Homodimer.</text>
</comment>
<comment type="similarity">
    <text evidence="1">Belongs to the tetrahydrofolate dehydrogenase/cyclohydrolase family.</text>
</comment>